<gene>
    <name type="ordered locus">HI_0574</name>
</gene>
<keyword id="KW-0413">Isomerase</keyword>
<keyword id="KW-1185">Reference proteome</keyword>
<keyword id="KW-0697">Rotamase</keyword>
<reference key="1">
    <citation type="journal article" date="1995" name="Science">
        <title>Whole-genome random sequencing and assembly of Haemophilus influenzae Rd.</title>
        <authorList>
            <person name="Fleischmann R.D."/>
            <person name="Adams M.D."/>
            <person name="White O."/>
            <person name="Clayton R.A."/>
            <person name="Kirkness E.F."/>
            <person name="Kerlavage A.R."/>
            <person name="Bult C.J."/>
            <person name="Tomb J.-F."/>
            <person name="Dougherty B.A."/>
            <person name="Merrick J.M."/>
            <person name="McKenney K."/>
            <person name="Sutton G.G."/>
            <person name="FitzHugh W."/>
            <person name="Fields C.A."/>
            <person name="Gocayne J.D."/>
            <person name="Scott J.D."/>
            <person name="Shirley R."/>
            <person name="Liu L.-I."/>
            <person name="Glodek A."/>
            <person name="Kelley J.M."/>
            <person name="Weidman J.F."/>
            <person name="Phillips C.A."/>
            <person name="Spriggs T."/>
            <person name="Hedblom E."/>
            <person name="Cotton M.D."/>
            <person name="Utterback T.R."/>
            <person name="Hanna M.C."/>
            <person name="Nguyen D.T."/>
            <person name="Saudek D.M."/>
            <person name="Brandon R.C."/>
            <person name="Fine L.D."/>
            <person name="Fritchman J.L."/>
            <person name="Fuhrmann J.L."/>
            <person name="Geoghagen N.S.M."/>
            <person name="Gnehm C.L."/>
            <person name="McDonald L.A."/>
            <person name="Small K.V."/>
            <person name="Fraser C.M."/>
            <person name="Smith H.O."/>
            <person name="Venter J.C."/>
        </authorList>
    </citation>
    <scope>NUCLEOTIDE SEQUENCE [LARGE SCALE GENOMIC DNA]</scope>
    <source>
        <strain>ATCC 51907 / DSM 11121 / KW20 / Rd</strain>
    </source>
</reference>
<reference key="2">
    <citation type="journal article" date="2000" name="Electrophoresis">
        <title>Two-dimensional map of the proteome of Haemophilus influenzae.</title>
        <authorList>
            <person name="Langen H."/>
            <person name="Takacs B."/>
            <person name="Evers S."/>
            <person name="Berndt P."/>
            <person name="Lahm H.W."/>
            <person name="Wipf B."/>
            <person name="Gray C."/>
            <person name="Fountoulakis M."/>
        </authorList>
    </citation>
    <scope>IDENTIFICATION BY MASS SPECTROMETRY</scope>
    <source>
        <strain>ATCC 51907 / DSM 11121 / KW20 / Rd</strain>
    </source>
</reference>
<comment type="function">
    <text evidence="1">PPIases accelerate the folding of proteins. It catalyzes the cis-trans isomerization of proline imidic peptide bonds in oligopeptides (By similarity).</text>
</comment>
<comment type="catalytic activity">
    <reaction>
        <text>[protein]-peptidylproline (omega=180) = [protein]-peptidylproline (omega=0)</text>
        <dbReference type="Rhea" id="RHEA:16237"/>
        <dbReference type="Rhea" id="RHEA-COMP:10747"/>
        <dbReference type="Rhea" id="RHEA-COMP:10748"/>
        <dbReference type="ChEBI" id="CHEBI:83833"/>
        <dbReference type="ChEBI" id="CHEBI:83834"/>
        <dbReference type="EC" id="5.2.1.8"/>
    </reaction>
</comment>
<comment type="similarity">
    <text evidence="3">Belongs to the FKBP-type PPIase family.</text>
</comment>
<proteinExistence type="evidence at protein level"/>
<accession>P44760</accession>
<feature type="chain" id="PRO_0000075373" description="Probable FKBP-type peptidyl-prolyl cis-trans isomerase">
    <location>
        <begin position="1"/>
        <end position="241"/>
    </location>
</feature>
<feature type="domain" description="PPIase FKBP-type" evidence="2">
    <location>
        <begin position="150"/>
        <end position="241"/>
    </location>
</feature>
<evidence type="ECO:0000250" key="1"/>
<evidence type="ECO:0000255" key="2">
    <source>
        <dbReference type="PROSITE-ProRule" id="PRU00277"/>
    </source>
</evidence>
<evidence type="ECO:0000305" key="3"/>
<dbReference type="EC" id="5.2.1.8"/>
<dbReference type="EMBL" id="L42023">
    <property type="protein sequence ID" value="AAC22232.1"/>
    <property type="molecule type" value="Genomic_DNA"/>
</dbReference>
<dbReference type="PIR" id="A64155">
    <property type="entry name" value="A64155"/>
</dbReference>
<dbReference type="RefSeq" id="NP_438731.1">
    <property type="nucleotide sequence ID" value="NC_000907.1"/>
</dbReference>
<dbReference type="SMR" id="P44760"/>
<dbReference type="STRING" id="71421.HI_0574"/>
<dbReference type="EnsemblBacteria" id="AAC22232">
    <property type="protein sequence ID" value="AAC22232"/>
    <property type="gene ID" value="HI_0574"/>
</dbReference>
<dbReference type="KEGG" id="hin:HI_0574"/>
<dbReference type="PATRIC" id="fig|71421.8.peg.594"/>
<dbReference type="eggNOG" id="COG0545">
    <property type="taxonomic scope" value="Bacteria"/>
</dbReference>
<dbReference type="HOGENOM" id="CLU_013615_0_2_6"/>
<dbReference type="OrthoDB" id="9814548at2"/>
<dbReference type="PhylomeDB" id="P44760"/>
<dbReference type="BioCyc" id="HINF71421:G1GJ1-586-MONOMER"/>
<dbReference type="Proteomes" id="UP000000579">
    <property type="component" value="Chromosome"/>
</dbReference>
<dbReference type="GO" id="GO:0003755">
    <property type="term" value="F:peptidyl-prolyl cis-trans isomerase activity"/>
    <property type="evidence" value="ECO:0000318"/>
    <property type="project" value="GO_Central"/>
</dbReference>
<dbReference type="GO" id="GO:0006457">
    <property type="term" value="P:protein folding"/>
    <property type="evidence" value="ECO:0007669"/>
    <property type="project" value="InterPro"/>
</dbReference>
<dbReference type="FunFam" id="3.10.50.40:FF:000006">
    <property type="entry name" value="Peptidyl-prolyl cis-trans isomerase"/>
    <property type="match status" value="1"/>
</dbReference>
<dbReference type="Gene3D" id="3.10.50.40">
    <property type="match status" value="1"/>
</dbReference>
<dbReference type="Gene3D" id="1.10.287.460">
    <property type="entry name" value="Peptidyl-prolyl cis-trans isomerase, FKBP-type, N-terminal domain"/>
    <property type="match status" value="1"/>
</dbReference>
<dbReference type="InterPro" id="IPR046357">
    <property type="entry name" value="PPIase_dom_sf"/>
</dbReference>
<dbReference type="InterPro" id="IPR001179">
    <property type="entry name" value="PPIase_FKBP_dom"/>
</dbReference>
<dbReference type="InterPro" id="IPR000774">
    <property type="entry name" value="PPIase_FKBP_N"/>
</dbReference>
<dbReference type="InterPro" id="IPR036944">
    <property type="entry name" value="PPIase_FKBP_N_sf"/>
</dbReference>
<dbReference type="NCBIfam" id="NF008150">
    <property type="entry name" value="PRK10902.1"/>
    <property type="match status" value="1"/>
</dbReference>
<dbReference type="PANTHER" id="PTHR43811:SF19">
    <property type="entry name" value="39 KDA FK506-BINDING NUCLEAR PROTEIN"/>
    <property type="match status" value="1"/>
</dbReference>
<dbReference type="PANTHER" id="PTHR43811">
    <property type="entry name" value="FKBP-TYPE PEPTIDYL-PROLYL CIS-TRANS ISOMERASE FKPA"/>
    <property type="match status" value="1"/>
</dbReference>
<dbReference type="Pfam" id="PF00254">
    <property type="entry name" value="FKBP_C"/>
    <property type="match status" value="1"/>
</dbReference>
<dbReference type="Pfam" id="PF01346">
    <property type="entry name" value="FKBP_N"/>
    <property type="match status" value="1"/>
</dbReference>
<dbReference type="SUPFAM" id="SSF54534">
    <property type="entry name" value="FKBP-like"/>
    <property type="match status" value="1"/>
</dbReference>
<dbReference type="PROSITE" id="PS50059">
    <property type="entry name" value="FKBP_PPIASE"/>
    <property type="match status" value="1"/>
</dbReference>
<sequence>MLKIQKLSIAALMVSAVISGQVFAEDNTFDEKAASYAVGTLMGSQMKDLVDSHKEVIKYDNARILDGLKDALEGKVDVRKDEKIQKTLESIEAKLVAASKAKAESIAKQAKEEGDKFRAEFAKGKDVKTTQSGLMYKIESAGKGDTIKSTDTVKVHYTGKLPNGKVFDSSVERGQPVEFQLDQVIKGWTEGLQLVKKGGKIQFVIAPELGYGEQGAGASIPPNSTLIFDVEVLDVNPKSEK</sequence>
<name>FKBY_HAEIN</name>
<organism>
    <name type="scientific">Haemophilus influenzae (strain ATCC 51907 / DSM 11121 / KW20 / Rd)</name>
    <dbReference type="NCBI Taxonomy" id="71421"/>
    <lineage>
        <taxon>Bacteria</taxon>
        <taxon>Pseudomonadati</taxon>
        <taxon>Pseudomonadota</taxon>
        <taxon>Gammaproteobacteria</taxon>
        <taxon>Pasteurellales</taxon>
        <taxon>Pasteurellaceae</taxon>
        <taxon>Haemophilus</taxon>
    </lineage>
</organism>
<protein>
    <recommendedName>
        <fullName>Probable FKBP-type peptidyl-prolyl cis-trans isomerase</fullName>
        <shortName>PPIase</shortName>
        <ecNumber>5.2.1.8</ecNumber>
    </recommendedName>
    <alternativeName>
        <fullName>Rotamase</fullName>
    </alternativeName>
</protein>